<organism>
    <name type="scientific">Streptomyces avermitilis (strain ATCC 31267 / DSM 46492 / JCM 5070 / NBRC 14893 / NCIMB 12804 / NRRL 8165 / MA-4680)</name>
    <dbReference type="NCBI Taxonomy" id="227882"/>
    <lineage>
        <taxon>Bacteria</taxon>
        <taxon>Bacillati</taxon>
        <taxon>Actinomycetota</taxon>
        <taxon>Actinomycetes</taxon>
        <taxon>Kitasatosporales</taxon>
        <taxon>Streptomycetaceae</taxon>
        <taxon>Streptomyces</taxon>
    </lineage>
</organism>
<name>G3P2_STRAW</name>
<proteinExistence type="evidence at protein level"/>
<keyword id="KW-0963">Cytoplasm</keyword>
<keyword id="KW-0324">Glycolysis</keyword>
<keyword id="KW-0520">NAD</keyword>
<keyword id="KW-0547">Nucleotide-binding</keyword>
<keyword id="KW-0560">Oxidoreductase</keyword>
<keyword id="KW-1185">Reference proteome</keyword>
<reference key="1">
    <citation type="journal article" date="2001" name="Proc. Natl. Acad. Sci. U.S.A.">
        <title>Genome sequence of an industrial microorganism Streptomyces avermitilis: deducing the ability of producing secondary metabolites.</title>
        <authorList>
            <person name="Omura S."/>
            <person name="Ikeda H."/>
            <person name="Ishikawa J."/>
            <person name="Hanamoto A."/>
            <person name="Takahashi C."/>
            <person name="Shinose M."/>
            <person name="Takahashi Y."/>
            <person name="Horikawa H."/>
            <person name="Nakazawa H."/>
            <person name="Osonoe T."/>
            <person name="Kikuchi H."/>
            <person name="Shiba T."/>
            <person name="Sakaki Y."/>
            <person name="Hattori M."/>
        </authorList>
    </citation>
    <scope>NUCLEOTIDE SEQUENCE [LARGE SCALE GENOMIC DNA]</scope>
    <source>
        <strain>ATCC 31267 / DSM 46492 / JCM 5070 / NBRC 14893 / NCIMB 12804 / NRRL 8165 / MA-4680</strain>
    </source>
</reference>
<reference key="2">
    <citation type="journal article" date="2003" name="Nat. Biotechnol.">
        <title>Complete genome sequence and comparative analysis of the industrial microorganism Streptomyces avermitilis.</title>
        <authorList>
            <person name="Ikeda H."/>
            <person name="Ishikawa J."/>
            <person name="Hanamoto A."/>
            <person name="Shinose M."/>
            <person name="Kikuchi H."/>
            <person name="Shiba T."/>
            <person name="Sakaki Y."/>
            <person name="Hattori M."/>
            <person name="Omura S."/>
        </authorList>
    </citation>
    <scope>NUCLEOTIDE SEQUENCE [LARGE SCALE GENOMIC DNA]</scope>
    <source>
        <strain>ATCC 31267 / DSM 46492 / JCM 5070 / NBRC 14893 / NCIMB 12804 / NRRL 8165 / MA-4680</strain>
    </source>
</reference>
<reference key="3">
    <citation type="journal article" date="2006" name="Biochemistry">
        <title>A gene cluster for biosynthesis of the sesquiterpenoid antibiotic pentalenolactone in Streptomyces avermitilis.</title>
        <authorList>
            <person name="Tetzlaff C.N."/>
            <person name="You Z."/>
            <person name="Cane D.E."/>
            <person name="Takamatsu S."/>
            <person name="Omura S."/>
            <person name="Ikeda H."/>
        </authorList>
    </citation>
    <scope>FUNCTION</scope>
    <scope>CATALYTIC ACTIVITY</scope>
    <scope>ACTIVITY REGULATION</scope>
    <scope>BIOPHYSICOCHEMICAL PROPERTIES</scope>
    <source>
        <strain>ATCC 31267 / DSM 46492 / JCM 5070 / NBRC 14893 / NCIMB 12804 / NRRL 8165 / MA-4680</strain>
    </source>
</reference>
<sequence>MTIRVGINGFGRIGRNYFRALLEQGADIEIVAVNDLGDTATTAHLLKYDTILGRLKAEVTHTADTITVDGKTIKVFSERNPADIPWGELNVDIVIESTGIFTKKADAEKHIAGGAKKVLISAPASDEDITIVLGVNEDKYDPAKHNVISNASCTTNCVAPMAKVLDENFGIVKGLMTTIHAYTNDQRILDFPHKDLRRARAAAENIIPTTTGAAKATALVLPQLKGKMDGISMRVPVPTGSATDLVVEVSREVTKDEVNAAFKKAAEGELQGYLSYTEDPIVSSDIVGDPSSCTFDSAMTMVMEGTSVKILGWYDNEWGYSNRLVDLTVFVGNQL</sequence>
<gene>
    <name type="primary">gap2</name>
    <name type="ordered locus">SAV_6296</name>
</gene>
<feature type="chain" id="PRO_0000422015" description="Glyceraldehyde-3-phosphate dehydrogenase 2">
    <location>
        <begin position="1"/>
        <end position="335"/>
    </location>
</feature>
<feature type="active site" description="Nucleophile" evidence="1">
    <location>
        <position position="153"/>
    </location>
</feature>
<feature type="binding site" evidence="1">
    <location>
        <begin position="12"/>
        <end position="13"/>
    </location>
    <ligand>
        <name>NAD(+)</name>
        <dbReference type="ChEBI" id="CHEBI:57540"/>
    </ligand>
</feature>
<feature type="binding site" evidence="1">
    <location>
        <position position="35"/>
    </location>
    <ligand>
        <name>NAD(+)</name>
        <dbReference type="ChEBI" id="CHEBI:57540"/>
    </ligand>
</feature>
<feature type="binding site" evidence="1">
    <location>
        <position position="79"/>
    </location>
    <ligand>
        <name>NAD(+)</name>
        <dbReference type="ChEBI" id="CHEBI:57540"/>
    </ligand>
</feature>
<feature type="binding site" evidence="1">
    <location>
        <position position="121"/>
    </location>
    <ligand>
        <name>NAD(+)</name>
        <dbReference type="ChEBI" id="CHEBI:57540"/>
    </ligand>
</feature>
<feature type="binding site" evidence="1">
    <location>
        <begin position="152"/>
        <end position="154"/>
    </location>
    <ligand>
        <name>D-glyceraldehyde 3-phosphate</name>
        <dbReference type="ChEBI" id="CHEBI:59776"/>
    </ligand>
</feature>
<feature type="binding site" evidence="1">
    <location>
        <position position="183"/>
    </location>
    <ligand>
        <name>D-glyceraldehyde 3-phosphate</name>
        <dbReference type="ChEBI" id="CHEBI:59776"/>
    </ligand>
</feature>
<feature type="binding site" evidence="1">
    <location>
        <position position="184"/>
    </location>
    <ligand>
        <name>NAD(+)</name>
        <dbReference type="ChEBI" id="CHEBI:57540"/>
    </ligand>
</feature>
<feature type="binding site" evidence="1">
    <location>
        <position position="198"/>
    </location>
    <ligand>
        <name>D-glyceraldehyde 3-phosphate</name>
        <dbReference type="ChEBI" id="CHEBI:59776"/>
    </ligand>
</feature>
<feature type="binding site" evidence="1">
    <location>
        <begin position="211"/>
        <end position="212"/>
    </location>
    <ligand>
        <name>D-glyceraldehyde 3-phosphate</name>
        <dbReference type="ChEBI" id="CHEBI:59776"/>
    </ligand>
</feature>
<feature type="binding site" evidence="1">
    <location>
        <position position="234"/>
    </location>
    <ligand>
        <name>D-glyceraldehyde 3-phosphate</name>
        <dbReference type="ChEBI" id="CHEBI:59776"/>
    </ligand>
</feature>
<feature type="binding site" evidence="1">
    <location>
        <position position="316"/>
    </location>
    <ligand>
        <name>NAD(+)</name>
        <dbReference type="ChEBI" id="CHEBI:57540"/>
    </ligand>
</feature>
<feature type="site" description="Activates thiol group during catalysis" evidence="2">
    <location>
        <position position="180"/>
    </location>
</feature>
<dbReference type="EC" id="1.2.1.12" evidence="4"/>
<dbReference type="EMBL" id="BA000030">
    <property type="protein sequence ID" value="BAC74007.1"/>
    <property type="molecule type" value="Genomic_DNA"/>
</dbReference>
<dbReference type="SMR" id="Q829W3"/>
<dbReference type="GeneID" id="41543371"/>
<dbReference type="KEGG" id="sma:SAVERM_6296"/>
<dbReference type="eggNOG" id="COG0057">
    <property type="taxonomic scope" value="Bacteria"/>
</dbReference>
<dbReference type="HOGENOM" id="CLU_030140_0_2_11"/>
<dbReference type="OrthoDB" id="9803304at2"/>
<dbReference type="UniPathway" id="UPA00109">
    <property type="reaction ID" value="UER00184"/>
</dbReference>
<dbReference type="Proteomes" id="UP000000428">
    <property type="component" value="Chromosome"/>
</dbReference>
<dbReference type="GO" id="GO:0005737">
    <property type="term" value="C:cytoplasm"/>
    <property type="evidence" value="ECO:0007669"/>
    <property type="project" value="UniProtKB-SubCell"/>
</dbReference>
<dbReference type="GO" id="GO:0004365">
    <property type="term" value="F:glyceraldehyde-3-phosphate dehydrogenase (NAD+) (phosphorylating) activity"/>
    <property type="evidence" value="ECO:0000314"/>
    <property type="project" value="UniProtKB"/>
</dbReference>
<dbReference type="GO" id="GO:0051287">
    <property type="term" value="F:NAD binding"/>
    <property type="evidence" value="ECO:0000314"/>
    <property type="project" value="UniProtKB"/>
</dbReference>
<dbReference type="GO" id="GO:0050661">
    <property type="term" value="F:NADP binding"/>
    <property type="evidence" value="ECO:0007669"/>
    <property type="project" value="InterPro"/>
</dbReference>
<dbReference type="GO" id="GO:0006006">
    <property type="term" value="P:glucose metabolic process"/>
    <property type="evidence" value="ECO:0007669"/>
    <property type="project" value="InterPro"/>
</dbReference>
<dbReference type="GO" id="GO:0006096">
    <property type="term" value="P:glycolytic process"/>
    <property type="evidence" value="ECO:0007669"/>
    <property type="project" value="UniProtKB-UniPathway"/>
</dbReference>
<dbReference type="CDD" id="cd18126">
    <property type="entry name" value="GAPDH_I_C"/>
    <property type="match status" value="1"/>
</dbReference>
<dbReference type="CDD" id="cd05214">
    <property type="entry name" value="GAPDH_I_N"/>
    <property type="match status" value="1"/>
</dbReference>
<dbReference type="FunFam" id="3.30.360.10:FF:000002">
    <property type="entry name" value="Glyceraldehyde-3-phosphate dehydrogenase"/>
    <property type="match status" value="1"/>
</dbReference>
<dbReference type="FunFam" id="3.40.50.720:FF:000001">
    <property type="entry name" value="Glyceraldehyde-3-phosphate dehydrogenase"/>
    <property type="match status" value="1"/>
</dbReference>
<dbReference type="Gene3D" id="3.30.360.10">
    <property type="entry name" value="Dihydrodipicolinate Reductase, domain 2"/>
    <property type="match status" value="1"/>
</dbReference>
<dbReference type="Gene3D" id="3.40.50.720">
    <property type="entry name" value="NAD(P)-binding Rossmann-like Domain"/>
    <property type="match status" value="1"/>
</dbReference>
<dbReference type="InterPro" id="IPR020831">
    <property type="entry name" value="GlycerAld/Erythrose_P_DH"/>
</dbReference>
<dbReference type="InterPro" id="IPR020829">
    <property type="entry name" value="GlycerAld_3-P_DH_cat"/>
</dbReference>
<dbReference type="InterPro" id="IPR020828">
    <property type="entry name" value="GlycerAld_3-P_DH_NAD(P)-bd"/>
</dbReference>
<dbReference type="InterPro" id="IPR006424">
    <property type="entry name" value="Glyceraldehyde-3-P_DH_1"/>
</dbReference>
<dbReference type="InterPro" id="IPR036291">
    <property type="entry name" value="NAD(P)-bd_dom_sf"/>
</dbReference>
<dbReference type="NCBIfam" id="TIGR01534">
    <property type="entry name" value="GAPDH-I"/>
    <property type="match status" value="1"/>
</dbReference>
<dbReference type="PANTHER" id="PTHR43148">
    <property type="entry name" value="GLYCERALDEHYDE-3-PHOSPHATE DEHYDROGENASE 2"/>
    <property type="match status" value="1"/>
</dbReference>
<dbReference type="Pfam" id="PF02800">
    <property type="entry name" value="Gp_dh_C"/>
    <property type="match status" value="1"/>
</dbReference>
<dbReference type="Pfam" id="PF00044">
    <property type="entry name" value="Gp_dh_N"/>
    <property type="match status" value="1"/>
</dbReference>
<dbReference type="PIRSF" id="PIRSF000149">
    <property type="entry name" value="GAP_DH"/>
    <property type="match status" value="1"/>
</dbReference>
<dbReference type="PRINTS" id="PR00078">
    <property type="entry name" value="G3PDHDRGNASE"/>
</dbReference>
<dbReference type="SMART" id="SM00846">
    <property type="entry name" value="Gp_dh_N"/>
    <property type="match status" value="1"/>
</dbReference>
<dbReference type="SUPFAM" id="SSF55347">
    <property type="entry name" value="Glyceraldehyde-3-phosphate dehydrogenase-like, C-terminal domain"/>
    <property type="match status" value="1"/>
</dbReference>
<dbReference type="SUPFAM" id="SSF51735">
    <property type="entry name" value="NAD(P)-binding Rossmann-fold domains"/>
    <property type="match status" value="1"/>
</dbReference>
<accession>Q829W3</accession>
<protein>
    <recommendedName>
        <fullName evidence="5">Glyceraldehyde-3-phosphate dehydrogenase 2</fullName>
        <shortName evidence="5">GAPDH 2</shortName>
        <ecNumber evidence="4">1.2.1.12</ecNumber>
    </recommendedName>
    <alternativeName>
        <fullName evidence="5">NAD-dependent glyceraldehyde-3-phosphate dehydrogenase</fullName>
    </alternativeName>
    <alternativeName>
        <fullName evidence="5">PL-sensitive glyceraldehyde-3-phosphate dehydrogenase</fullName>
    </alternativeName>
</protein>
<comment type="function">
    <text evidence="4">Catalyzes the oxidative phosphorylation of glyceraldehyde 3-phosphate (G3P) to 1,3-bisphosphoglycerate (BPG) using the cofactor NAD. The first reaction step involves the formation of a hemiacetal intermediate between G3P and a cysteine residue, and this hemiacetal intermediate is then oxidized to a thioester, with concomitant reduction of NAD to NADH. The reduced NADH is then exchanged with the second NAD, and the thioester is attacked by a nucleophilic inorganic phosphate to produce BPG.</text>
</comment>
<comment type="catalytic activity">
    <reaction evidence="4">
        <text>D-glyceraldehyde 3-phosphate + phosphate + NAD(+) = (2R)-3-phospho-glyceroyl phosphate + NADH + H(+)</text>
        <dbReference type="Rhea" id="RHEA:10300"/>
        <dbReference type="ChEBI" id="CHEBI:15378"/>
        <dbReference type="ChEBI" id="CHEBI:43474"/>
        <dbReference type="ChEBI" id="CHEBI:57540"/>
        <dbReference type="ChEBI" id="CHEBI:57604"/>
        <dbReference type="ChEBI" id="CHEBI:57945"/>
        <dbReference type="ChEBI" id="CHEBI:59776"/>
        <dbReference type="EC" id="1.2.1.12"/>
    </reaction>
</comment>
<comment type="activity regulation">
    <text evidence="4">Inhibited by pentalenolactone.</text>
</comment>
<comment type="biophysicochemical properties">
    <kinetics>
        <KM evidence="4">0.33 mM for D-glyceraldehyde 3-phosphate</KM>
        <text evidence="4">kcat is 165 sec(-1) with D-glyceraldehyde 3-phosphate.</text>
    </kinetics>
</comment>
<comment type="pathway">
    <text evidence="6">Carbohydrate degradation; glycolysis; pyruvate from D-glyceraldehyde 3-phosphate: step 1/5.</text>
</comment>
<comment type="subunit">
    <text evidence="3">Homotetramer.</text>
</comment>
<comment type="subcellular location">
    <subcellularLocation>
        <location evidence="6">Cytoplasm</location>
    </subcellularLocation>
</comment>
<comment type="similarity">
    <text evidence="6">Belongs to the glyceraldehyde-3-phosphate dehydrogenase family.</text>
</comment>
<evidence type="ECO:0000250" key="1">
    <source>
        <dbReference type="UniProtKB" id="P00362"/>
    </source>
</evidence>
<evidence type="ECO:0000250" key="2">
    <source>
        <dbReference type="UniProtKB" id="P0A9B2"/>
    </source>
</evidence>
<evidence type="ECO:0000250" key="3">
    <source>
        <dbReference type="UniProtKB" id="P54226"/>
    </source>
</evidence>
<evidence type="ECO:0000269" key="4">
    <source>
    </source>
</evidence>
<evidence type="ECO:0000303" key="5">
    <source>
    </source>
</evidence>
<evidence type="ECO:0000305" key="6"/>